<evidence type="ECO:0000269" key="1">
    <source>
    </source>
</evidence>
<evidence type="ECO:0000303" key="2">
    <source>
    </source>
</evidence>
<evidence type="ECO:0000305" key="3">
    <source>
    </source>
</evidence>
<keyword id="KW-0903">Direct protein sequencing</keyword>
<keyword id="KW-0964">Secreted</keyword>
<proteinExistence type="evidence at protein level"/>
<dbReference type="GO" id="GO:0005576">
    <property type="term" value="C:extracellular region"/>
    <property type="evidence" value="ECO:0007669"/>
    <property type="project" value="UniProtKB-SubCell"/>
</dbReference>
<accession>P0DRG4</accession>
<name>CRY19_TITOB</name>
<feature type="peptide" id="PRO_0000461754" description="Cryptide Pep-19" evidence="1">
    <location>
        <begin position="1"/>
        <end position="8"/>
    </location>
</feature>
<protein>
    <recommendedName>
        <fullName evidence="2">Cryptide Pep-19</fullName>
    </recommendedName>
</protein>
<sequence length="8" mass="837">LFGAFALV</sequence>
<comment type="subcellular location">
    <subcellularLocation>
        <location evidence="1">Secreted</location>
    </subcellularLocation>
</comment>
<comment type="tissue specificity">
    <text evidence="3">Expressed by the venom gland.</text>
</comment>
<comment type="mass spectrometry" mass="837.45" method="Electrospray" evidence="1"/>
<organism>
    <name type="scientific">Tityus obscurus</name>
    <name type="common">Amazonian scorpion</name>
    <name type="synonym">Tityus cambridgei</name>
    <dbReference type="NCBI Taxonomy" id="1221240"/>
    <lineage>
        <taxon>Eukaryota</taxon>
        <taxon>Metazoa</taxon>
        <taxon>Ecdysozoa</taxon>
        <taxon>Arthropoda</taxon>
        <taxon>Chelicerata</taxon>
        <taxon>Arachnida</taxon>
        <taxon>Scorpiones</taxon>
        <taxon>Buthida</taxon>
        <taxon>Buthoidea</taxon>
        <taxon>Buthidae</taxon>
        <taxon>Tityus</taxon>
    </lineage>
</organism>
<reference key="1">
    <citation type="journal article" date="2018" name="J. Proteomics">
        <title>Profiling the short, linear, non-disulfide bond-containing peptidome from the venom of the scorpion Tityus obscurus.</title>
        <authorList>
            <person name="Dias N.B."/>
            <person name="de Souza B.M."/>
            <person name="Cocchi F.K."/>
            <person name="Chalkidis H.M."/>
            <person name="Dorce V.A.C."/>
            <person name="Palma M.S."/>
        </authorList>
    </citation>
    <scope>PROTEIN SEQUENCE</scope>
    <scope>IDENTIFICATION BY MASS SPECTROMETRY</scope>
    <scope>MASS SPECTROMETRY</scope>
    <scope>SUBCELLULAR LOCATION</scope>
    <source>
        <tissue>Venom</tissue>
    </source>
</reference>